<protein>
    <recommendedName>
        <fullName evidence="1">Proline--tRNA ligase</fullName>
        <ecNumber evidence="1">6.1.1.15</ecNumber>
    </recommendedName>
    <alternativeName>
        <fullName evidence="1">Prolyl-tRNA synthetase</fullName>
        <shortName evidence="1">ProRS</shortName>
    </alternativeName>
</protein>
<proteinExistence type="inferred from homology"/>
<accession>B5FBD6</accession>
<reference key="1">
    <citation type="submission" date="2008-08" db="EMBL/GenBank/DDBJ databases">
        <title>Complete sequence of Vibrio fischeri strain MJ11.</title>
        <authorList>
            <person name="Mandel M.J."/>
            <person name="Stabb E.V."/>
            <person name="Ruby E.G."/>
            <person name="Ferriera S."/>
            <person name="Johnson J."/>
            <person name="Kravitz S."/>
            <person name="Beeson K."/>
            <person name="Sutton G."/>
            <person name="Rogers Y.-H."/>
            <person name="Friedman R."/>
            <person name="Frazier M."/>
            <person name="Venter J.C."/>
        </authorList>
    </citation>
    <scope>NUCLEOTIDE SEQUENCE [LARGE SCALE GENOMIC DNA]</scope>
    <source>
        <strain>MJ11</strain>
    </source>
</reference>
<comment type="function">
    <text evidence="1">Catalyzes the attachment of proline to tRNA(Pro) in a two-step reaction: proline is first activated by ATP to form Pro-AMP and then transferred to the acceptor end of tRNA(Pro). As ProRS can inadvertently accommodate and process non-cognate amino acids such as alanine and cysteine, to avoid such errors it has two additional distinct editing activities against alanine. One activity is designated as 'pretransfer' editing and involves the tRNA(Pro)-independent hydrolysis of activated Ala-AMP. The other activity is designated 'posttransfer' editing and involves deacylation of mischarged Ala-tRNA(Pro). The misacylated Cys-tRNA(Pro) is not edited by ProRS.</text>
</comment>
<comment type="catalytic activity">
    <reaction evidence="1">
        <text>tRNA(Pro) + L-proline + ATP = L-prolyl-tRNA(Pro) + AMP + diphosphate</text>
        <dbReference type="Rhea" id="RHEA:14305"/>
        <dbReference type="Rhea" id="RHEA-COMP:9700"/>
        <dbReference type="Rhea" id="RHEA-COMP:9702"/>
        <dbReference type="ChEBI" id="CHEBI:30616"/>
        <dbReference type="ChEBI" id="CHEBI:33019"/>
        <dbReference type="ChEBI" id="CHEBI:60039"/>
        <dbReference type="ChEBI" id="CHEBI:78442"/>
        <dbReference type="ChEBI" id="CHEBI:78532"/>
        <dbReference type="ChEBI" id="CHEBI:456215"/>
        <dbReference type="EC" id="6.1.1.15"/>
    </reaction>
</comment>
<comment type="subunit">
    <text evidence="1">Homodimer.</text>
</comment>
<comment type="subcellular location">
    <subcellularLocation>
        <location evidence="1">Cytoplasm</location>
    </subcellularLocation>
</comment>
<comment type="domain">
    <text evidence="1">Consists of three domains: the N-terminal catalytic domain, the editing domain and the C-terminal anticodon-binding domain.</text>
</comment>
<comment type="similarity">
    <text evidence="1">Belongs to the class-II aminoacyl-tRNA synthetase family. ProS type 1 subfamily.</text>
</comment>
<gene>
    <name evidence="1" type="primary">proS</name>
    <name type="ordered locus">VFMJ11_0701</name>
</gene>
<feature type="chain" id="PRO_1000199440" description="Proline--tRNA ligase">
    <location>
        <begin position="1"/>
        <end position="571"/>
    </location>
</feature>
<sequence length="571" mass="63216">MRTSKYLLSTLKETPNDAEVVSHQLMLRAGMIRRLASGLYTWLPTGLRVLRKVENIVRQEIDNAGAIETLMPVVQPFELWEETGRSEKMGPELLRFTDRHVRPFVLSPTAEEVITSLVRNEVSSYKQLPLNLYQIQTKFRDERRPRFGVMRAREFCMMDAYSFDIDKEGLQKSYDAMHDAYCKAFDRMGLEYRPVLADSGAIGGSGSQEFHVLAESGEDLIAFSTESDYAANIEKAEAVAPTAERAAPTQEMTTVDTPNAKTIAELVEQHGIAIEKTVKTLFVKASDDVDADIIALIIRGDHELNEVKAENLPQVASPLEMADEAQLRDLIGAGAGSLGPVGLELPFIVDRSVAVMSDFGTGANIDGKHFFGVNWDRDVQLGQVEDLRNVVEGDPSPCGKGTLQLKRGIEVGHIFQLGTAYSEAMNCGVLDANGKNVILEMGCYGIGVSRVVASAIEQNNDEYGIVWPEAIAPFTVAIVPMNMHKSERVKEAAEKLYAELTAMGIEVLFDDRKERPGVMFKDIELIGIPHTIVIGDRSMDEGNFEYKNRRANTKEAVEMANIVEHIKAQLS</sequence>
<dbReference type="EC" id="6.1.1.15" evidence="1"/>
<dbReference type="EMBL" id="CP001139">
    <property type="protein sequence ID" value="ACH65387.1"/>
    <property type="molecule type" value="Genomic_DNA"/>
</dbReference>
<dbReference type="RefSeq" id="WP_012533021.1">
    <property type="nucleotide sequence ID" value="NC_011184.1"/>
</dbReference>
<dbReference type="SMR" id="B5FBD6"/>
<dbReference type="KEGG" id="vfm:VFMJ11_0701"/>
<dbReference type="HOGENOM" id="CLU_016739_0_0_6"/>
<dbReference type="Proteomes" id="UP000001857">
    <property type="component" value="Chromosome I"/>
</dbReference>
<dbReference type="GO" id="GO:0005829">
    <property type="term" value="C:cytosol"/>
    <property type="evidence" value="ECO:0007669"/>
    <property type="project" value="TreeGrafter"/>
</dbReference>
<dbReference type="GO" id="GO:0002161">
    <property type="term" value="F:aminoacyl-tRNA deacylase activity"/>
    <property type="evidence" value="ECO:0007669"/>
    <property type="project" value="InterPro"/>
</dbReference>
<dbReference type="GO" id="GO:0005524">
    <property type="term" value="F:ATP binding"/>
    <property type="evidence" value="ECO:0007669"/>
    <property type="project" value="UniProtKB-UniRule"/>
</dbReference>
<dbReference type="GO" id="GO:0004827">
    <property type="term" value="F:proline-tRNA ligase activity"/>
    <property type="evidence" value="ECO:0007669"/>
    <property type="project" value="UniProtKB-UniRule"/>
</dbReference>
<dbReference type="GO" id="GO:0006433">
    <property type="term" value="P:prolyl-tRNA aminoacylation"/>
    <property type="evidence" value="ECO:0007669"/>
    <property type="project" value="UniProtKB-UniRule"/>
</dbReference>
<dbReference type="CDD" id="cd04334">
    <property type="entry name" value="ProRS-INS"/>
    <property type="match status" value="1"/>
</dbReference>
<dbReference type="CDD" id="cd00861">
    <property type="entry name" value="ProRS_anticodon_short"/>
    <property type="match status" value="1"/>
</dbReference>
<dbReference type="CDD" id="cd00779">
    <property type="entry name" value="ProRS_core_prok"/>
    <property type="match status" value="1"/>
</dbReference>
<dbReference type="FunFam" id="3.30.930.10:FF:000043">
    <property type="entry name" value="Proline--tRNA ligase"/>
    <property type="match status" value="1"/>
</dbReference>
<dbReference type="FunFam" id="3.40.50.800:FF:000006">
    <property type="entry name" value="Proline--tRNA ligase"/>
    <property type="match status" value="1"/>
</dbReference>
<dbReference type="FunFam" id="3.90.960.10:FF:000001">
    <property type="entry name" value="Proline--tRNA ligase"/>
    <property type="match status" value="1"/>
</dbReference>
<dbReference type="Gene3D" id="3.40.50.800">
    <property type="entry name" value="Anticodon-binding domain"/>
    <property type="match status" value="1"/>
</dbReference>
<dbReference type="Gene3D" id="3.30.930.10">
    <property type="entry name" value="Bira Bifunctional Protein, Domain 2"/>
    <property type="match status" value="2"/>
</dbReference>
<dbReference type="HAMAP" id="MF_01569">
    <property type="entry name" value="Pro_tRNA_synth_type1"/>
    <property type="match status" value="1"/>
</dbReference>
<dbReference type="InterPro" id="IPR002314">
    <property type="entry name" value="aa-tRNA-synt_IIb"/>
</dbReference>
<dbReference type="InterPro" id="IPR006195">
    <property type="entry name" value="aa-tRNA-synth_II"/>
</dbReference>
<dbReference type="InterPro" id="IPR045864">
    <property type="entry name" value="aa-tRNA-synth_II/BPL/LPL"/>
</dbReference>
<dbReference type="InterPro" id="IPR004154">
    <property type="entry name" value="Anticodon-bd"/>
</dbReference>
<dbReference type="InterPro" id="IPR036621">
    <property type="entry name" value="Anticodon-bd_dom_sf"/>
</dbReference>
<dbReference type="InterPro" id="IPR002316">
    <property type="entry name" value="Pro-tRNA-ligase_IIa"/>
</dbReference>
<dbReference type="InterPro" id="IPR004500">
    <property type="entry name" value="Pro-tRNA-synth_IIa_bac-type"/>
</dbReference>
<dbReference type="InterPro" id="IPR023717">
    <property type="entry name" value="Pro-tRNA-Synthase_IIa_type1"/>
</dbReference>
<dbReference type="InterPro" id="IPR050062">
    <property type="entry name" value="Pro-tRNA_synthetase"/>
</dbReference>
<dbReference type="InterPro" id="IPR044140">
    <property type="entry name" value="ProRS_anticodon_short"/>
</dbReference>
<dbReference type="InterPro" id="IPR033730">
    <property type="entry name" value="ProRS_core_prok"/>
</dbReference>
<dbReference type="InterPro" id="IPR036754">
    <property type="entry name" value="YbaK/aa-tRNA-synt-asso_dom_sf"/>
</dbReference>
<dbReference type="InterPro" id="IPR007214">
    <property type="entry name" value="YbaK/aa-tRNA-synth-assoc-dom"/>
</dbReference>
<dbReference type="NCBIfam" id="NF006625">
    <property type="entry name" value="PRK09194.1"/>
    <property type="match status" value="1"/>
</dbReference>
<dbReference type="NCBIfam" id="TIGR00409">
    <property type="entry name" value="proS_fam_II"/>
    <property type="match status" value="1"/>
</dbReference>
<dbReference type="PANTHER" id="PTHR42753">
    <property type="entry name" value="MITOCHONDRIAL RIBOSOME PROTEIN L39/PROLYL-TRNA LIGASE FAMILY MEMBER"/>
    <property type="match status" value="1"/>
</dbReference>
<dbReference type="PANTHER" id="PTHR42753:SF2">
    <property type="entry name" value="PROLINE--TRNA LIGASE"/>
    <property type="match status" value="1"/>
</dbReference>
<dbReference type="Pfam" id="PF03129">
    <property type="entry name" value="HGTP_anticodon"/>
    <property type="match status" value="1"/>
</dbReference>
<dbReference type="Pfam" id="PF00587">
    <property type="entry name" value="tRNA-synt_2b"/>
    <property type="match status" value="1"/>
</dbReference>
<dbReference type="Pfam" id="PF04073">
    <property type="entry name" value="tRNA_edit"/>
    <property type="match status" value="1"/>
</dbReference>
<dbReference type="PIRSF" id="PIRSF001535">
    <property type="entry name" value="ProRS_1"/>
    <property type="match status" value="1"/>
</dbReference>
<dbReference type="PRINTS" id="PR01046">
    <property type="entry name" value="TRNASYNTHPRO"/>
</dbReference>
<dbReference type="SUPFAM" id="SSF52954">
    <property type="entry name" value="Class II aaRS ABD-related"/>
    <property type="match status" value="1"/>
</dbReference>
<dbReference type="SUPFAM" id="SSF55681">
    <property type="entry name" value="Class II aaRS and biotin synthetases"/>
    <property type="match status" value="1"/>
</dbReference>
<dbReference type="SUPFAM" id="SSF55826">
    <property type="entry name" value="YbaK/ProRS associated domain"/>
    <property type="match status" value="1"/>
</dbReference>
<dbReference type="PROSITE" id="PS50862">
    <property type="entry name" value="AA_TRNA_LIGASE_II"/>
    <property type="match status" value="1"/>
</dbReference>
<name>SYP_ALIFM</name>
<evidence type="ECO:0000255" key="1">
    <source>
        <dbReference type="HAMAP-Rule" id="MF_01569"/>
    </source>
</evidence>
<organism>
    <name type="scientific">Aliivibrio fischeri (strain MJ11)</name>
    <name type="common">Vibrio fischeri</name>
    <dbReference type="NCBI Taxonomy" id="388396"/>
    <lineage>
        <taxon>Bacteria</taxon>
        <taxon>Pseudomonadati</taxon>
        <taxon>Pseudomonadota</taxon>
        <taxon>Gammaproteobacteria</taxon>
        <taxon>Vibrionales</taxon>
        <taxon>Vibrionaceae</taxon>
        <taxon>Aliivibrio</taxon>
    </lineage>
</organism>
<keyword id="KW-0030">Aminoacyl-tRNA synthetase</keyword>
<keyword id="KW-0067">ATP-binding</keyword>
<keyword id="KW-0963">Cytoplasm</keyword>
<keyword id="KW-0436">Ligase</keyword>
<keyword id="KW-0547">Nucleotide-binding</keyword>
<keyword id="KW-0648">Protein biosynthesis</keyword>